<evidence type="ECO:0000255" key="1">
    <source>
        <dbReference type="HAMAP-Rule" id="MF_00176"/>
    </source>
</evidence>
<name>SYS_SACI4</name>
<keyword id="KW-0030">Aminoacyl-tRNA synthetase</keyword>
<keyword id="KW-0067">ATP-binding</keyword>
<keyword id="KW-0963">Cytoplasm</keyword>
<keyword id="KW-0436">Ligase</keyword>
<keyword id="KW-0547">Nucleotide-binding</keyword>
<keyword id="KW-0648">Protein biosynthesis</keyword>
<feature type="chain" id="PRO_1000203772" description="Serine--tRNA ligase">
    <location>
        <begin position="1"/>
        <end position="457"/>
    </location>
</feature>
<feature type="binding site" evidence="1">
    <location>
        <begin position="252"/>
        <end position="254"/>
    </location>
    <ligand>
        <name>L-serine</name>
        <dbReference type="ChEBI" id="CHEBI:33384"/>
    </ligand>
</feature>
<feature type="binding site" evidence="1">
    <location>
        <begin position="283"/>
        <end position="285"/>
    </location>
    <ligand>
        <name>ATP</name>
        <dbReference type="ChEBI" id="CHEBI:30616"/>
    </ligand>
</feature>
<feature type="binding site" evidence="1">
    <location>
        <position position="299"/>
    </location>
    <ligand>
        <name>ATP</name>
        <dbReference type="ChEBI" id="CHEBI:30616"/>
    </ligand>
</feature>
<feature type="binding site" evidence="1">
    <location>
        <position position="306"/>
    </location>
    <ligand>
        <name>L-serine</name>
        <dbReference type="ChEBI" id="CHEBI:33384"/>
    </ligand>
</feature>
<feature type="binding site" evidence="1">
    <location>
        <begin position="370"/>
        <end position="373"/>
    </location>
    <ligand>
        <name>ATP</name>
        <dbReference type="ChEBI" id="CHEBI:30616"/>
    </ligand>
</feature>
<feature type="binding site" evidence="1">
    <location>
        <position position="406"/>
    </location>
    <ligand>
        <name>L-serine</name>
        <dbReference type="ChEBI" id="CHEBI:33384"/>
    </ligand>
</feature>
<sequence length="457" mass="53202">MSWSILEFLRKNPEELKNNLKRRAIDVSLVDKAVELDKKWRQVLQEVERLRHQHNVLSSQIPKLSGEERKKKIEESKNLLKILEDKEKELEKIEVERDRLLSSLPNLVADDVPNGPDDSYNIPIKFWGKFKVYEGDVEEFLRQTKDANVNYEIIKWKPKGHAEMLEDVLHLGNTLKAAEIAGSRFYYLFNDIVWLDFALLLFAIDYITQQGYTLVLPPYMLRGEVIQSVIDLDTFKDAIYKIENEDLYLIATAEHSVAAMFFKEEIEKDKLPLKFAGISPAFRKEAGAANKDLKGIFRVHQFHKVEQFIFSTPEDSWKYHAELITNAESIFQQLELPYRIVNIASGDLGACAAKKFDLEVWMPAQAKFREMVSCSNCTDWQAFRMKIRYVDRKNNKRGYVHTLNSTAIASTRTITAILENYQREDGVVEVPKVLRKYLEIFPKAPKDYIYPLKNKII</sequence>
<proteinExistence type="inferred from homology"/>
<dbReference type="EC" id="6.1.1.11" evidence="1"/>
<dbReference type="EMBL" id="CP001400">
    <property type="protein sequence ID" value="ACP38279.1"/>
    <property type="molecule type" value="Genomic_DNA"/>
</dbReference>
<dbReference type="RefSeq" id="WP_012711524.1">
    <property type="nucleotide sequence ID" value="NC_012588.1"/>
</dbReference>
<dbReference type="SMR" id="C3MW57"/>
<dbReference type="GeneID" id="7793980"/>
<dbReference type="KEGG" id="sia:M1425_1530"/>
<dbReference type="HOGENOM" id="CLU_023797_0_1_2"/>
<dbReference type="UniPathway" id="UPA00906">
    <property type="reaction ID" value="UER00895"/>
</dbReference>
<dbReference type="Proteomes" id="UP000001350">
    <property type="component" value="Chromosome"/>
</dbReference>
<dbReference type="GO" id="GO:0005737">
    <property type="term" value="C:cytoplasm"/>
    <property type="evidence" value="ECO:0007669"/>
    <property type="project" value="UniProtKB-SubCell"/>
</dbReference>
<dbReference type="GO" id="GO:0005524">
    <property type="term" value="F:ATP binding"/>
    <property type="evidence" value="ECO:0007669"/>
    <property type="project" value="UniProtKB-UniRule"/>
</dbReference>
<dbReference type="GO" id="GO:0004828">
    <property type="term" value="F:serine-tRNA ligase activity"/>
    <property type="evidence" value="ECO:0007669"/>
    <property type="project" value="UniProtKB-UniRule"/>
</dbReference>
<dbReference type="GO" id="GO:0016260">
    <property type="term" value="P:selenocysteine biosynthetic process"/>
    <property type="evidence" value="ECO:0007669"/>
    <property type="project" value="UniProtKB-UniRule"/>
</dbReference>
<dbReference type="GO" id="GO:0006434">
    <property type="term" value="P:seryl-tRNA aminoacylation"/>
    <property type="evidence" value="ECO:0007669"/>
    <property type="project" value="UniProtKB-UniRule"/>
</dbReference>
<dbReference type="CDD" id="cd00770">
    <property type="entry name" value="SerRS_core"/>
    <property type="match status" value="1"/>
</dbReference>
<dbReference type="FunFam" id="1.10.287.40:FF:000004">
    <property type="entry name" value="Serine--tRNA ligase"/>
    <property type="match status" value="1"/>
</dbReference>
<dbReference type="FunFam" id="3.30.930.10:FF:000048">
    <property type="entry name" value="Serine--tRNA ligase"/>
    <property type="match status" value="1"/>
</dbReference>
<dbReference type="Gene3D" id="3.30.930.10">
    <property type="entry name" value="Bira Bifunctional Protein, Domain 2"/>
    <property type="match status" value="1"/>
</dbReference>
<dbReference type="Gene3D" id="1.10.287.40">
    <property type="entry name" value="Serine-tRNA synthetase, tRNA binding domain"/>
    <property type="match status" value="1"/>
</dbReference>
<dbReference type="HAMAP" id="MF_00176">
    <property type="entry name" value="Ser_tRNA_synth_type1"/>
    <property type="match status" value="1"/>
</dbReference>
<dbReference type="InterPro" id="IPR002314">
    <property type="entry name" value="aa-tRNA-synt_IIb"/>
</dbReference>
<dbReference type="InterPro" id="IPR006195">
    <property type="entry name" value="aa-tRNA-synth_II"/>
</dbReference>
<dbReference type="InterPro" id="IPR045864">
    <property type="entry name" value="aa-tRNA-synth_II/BPL/LPL"/>
</dbReference>
<dbReference type="InterPro" id="IPR002317">
    <property type="entry name" value="Ser-tRNA-ligase_type_1"/>
</dbReference>
<dbReference type="InterPro" id="IPR015866">
    <property type="entry name" value="Ser-tRNA-synth_1_N"/>
</dbReference>
<dbReference type="InterPro" id="IPR042103">
    <property type="entry name" value="SerRS_1_N_sf"/>
</dbReference>
<dbReference type="InterPro" id="IPR033729">
    <property type="entry name" value="SerRS_core"/>
</dbReference>
<dbReference type="InterPro" id="IPR010978">
    <property type="entry name" value="tRNA-bd_arm"/>
</dbReference>
<dbReference type="NCBIfam" id="TIGR00414">
    <property type="entry name" value="serS"/>
    <property type="match status" value="1"/>
</dbReference>
<dbReference type="PANTHER" id="PTHR11778">
    <property type="entry name" value="SERYL-TRNA SYNTHETASE"/>
    <property type="match status" value="1"/>
</dbReference>
<dbReference type="Pfam" id="PF02403">
    <property type="entry name" value="Seryl_tRNA_N"/>
    <property type="match status" value="1"/>
</dbReference>
<dbReference type="Pfam" id="PF00587">
    <property type="entry name" value="tRNA-synt_2b"/>
    <property type="match status" value="1"/>
</dbReference>
<dbReference type="PIRSF" id="PIRSF001529">
    <property type="entry name" value="Ser-tRNA-synth_IIa"/>
    <property type="match status" value="1"/>
</dbReference>
<dbReference type="PRINTS" id="PR00981">
    <property type="entry name" value="TRNASYNTHSER"/>
</dbReference>
<dbReference type="SUPFAM" id="SSF55681">
    <property type="entry name" value="Class II aaRS and biotin synthetases"/>
    <property type="match status" value="1"/>
</dbReference>
<dbReference type="SUPFAM" id="SSF46589">
    <property type="entry name" value="tRNA-binding arm"/>
    <property type="match status" value="1"/>
</dbReference>
<dbReference type="PROSITE" id="PS50862">
    <property type="entry name" value="AA_TRNA_LIGASE_II"/>
    <property type="match status" value="1"/>
</dbReference>
<accession>C3MW57</accession>
<gene>
    <name evidence="1" type="primary">serS</name>
    <name type="ordered locus">M1425_1530</name>
</gene>
<organism>
    <name type="scientific">Saccharolobus islandicus (strain M.14.25 / Kamchatka #1)</name>
    <name type="common">Sulfolobus islandicus</name>
    <dbReference type="NCBI Taxonomy" id="427317"/>
    <lineage>
        <taxon>Archaea</taxon>
        <taxon>Thermoproteota</taxon>
        <taxon>Thermoprotei</taxon>
        <taxon>Sulfolobales</taxon>
        <taxon>Sulfolobaceae</taxon>
        <taxon>Saccharolobus</taxon>
    </lineage>
</organism>
<comment type="function">
    <text evidence="1">Catalyzes the attachment of serine to tRNA(Ser). Is also able to aminoacylate tRNA(Sec) with serine, to form the misacylated tRNA L-seryl-tRNA(Sec), which will be further converted into selenocysteinyl-tRNA(Sec).</text>
</comment>
<comment type="catalytic activity">
    <reaction evidence="1">
        <text>tRNA(Ser) + L-serine + ATP = L-seryl-tRNA(Ser) + AMP + diphosphate + H(+)</text>
        <dbReference type="Rhea" id="RHEA:12292"/>
        <dbReference type="Rhea" id="RHEA-COMP:9669"/>
        <dbReference type="Rhea" id="RHEA-COMP:9703"/>
        <dbReference type="ChEBI" id="CHEBI:15378"/>
        <dbReference type="ChEBI" id="CHEBI:30616"/>
        <dbReference type="ChEBI" id="CHEBI:33019"/>
        <dbReference type="ChEBI" id="CHEBI:33384"/>
        <dbReference type="ChEBI" id="CHEBI:78442"/>
        <dbReference type="ChEBI" id="CHEBI:78533"/>
        <dbReference type="ChEBI" id="CHEBI:456215"/>
        <dbReference type="EC" id="6.1.1.11"/>
    </reaction>
</comment>
<comment type="catalytic activity">
    <reaction evidence="1">
        <text>tRNA(Sec) + L-serine + ATP = L-seryl-tRNA(Sec) + AMP + diphosphate + H(+)</text>
        <dbReference type="Rhea" id="RHEA:42580"/>
        <dbReference type="Rhea" id="RHEA-COMP:9742"/>
        <dbReference type="Rhea" id="RHEA-COMP:10128"/>
        <dbReference type="ChEBI" id="CHEBI:15378"/>
        <dbReference type="ChEBI" id="CHEBI:30616"/>
        <dbReference type="ChEBI" id="CHEBI:33019"/>
        <dbReference type="ChEBI" id="CHEBI:33384"/>
        <dbReference type="ChEBI" id="CHEBI:78442"/>
        <dbReference type="ChEBI" id="CHEBI:78533"/>
        <dbReference type="ChEBI" id="CHEBI:456215"/>
        <dbReference type="EC" id="6.1.1.11"/>
    </reaction>
</comment>
<comment type="pathway">
    <text evidence="1">Aminoacyl-tRNA biosynthesis; selenocysteinyl-tRNA(Sec) biosynthesis; L-seryl-tRNA(Sec) from L-serine and tRNA(Sec): step 1/1.</text>
</comment>
<comment type="subunit">
    <text evidence="1">Homodimer. The tRNA molecule binds across the dimer.</text>
</comment>
<comment type="subcellular location">
    <subcellularLocation>
        <location evidence="1">Cytoplasm</location>
    </subcellularLocation>
</comment>
<comment type="domain">
    <text evidence="1">Consists of two distinct domains, a catalytic core and a N-terminal extension that is involved in tRNA binding.</text>
</comment>
<comment type="similarity">
    <text evidence="1">Belongs to the class-II aminoacyl-tRNA synthetase family. Type-1 seryl-tRNA synthetase subfamily.</text>
</comment>
<reference key="1">
    <citation type="journal article" date="2009" name="Proc. Natl. Acad. Sci. U.S.A.">
        <title>Biogeography of the Sulfolobus islandicus pan-genome.</title>
        <authorList>
            <person name="Reno M.L."/>
            <person name="Held N.L."/>
            <person name="Fields C.J."/>
            <person name="Burke P.V."/>
            <person name="Whitaker R.J."/>
        </authorList>
    </citation>
    <scope>NUCLEOTIDE SEQUENCE [LARGE SCALE GENOMIC DNA]</scope>
    <source>
        <strain>M.14.25 / Kamchatka #1</strain>
    </source>
</reference>
<protein>
    <recommendedName>
        <fullName evidence="1">Serine--tRNA ligase</fullName>
        <ecNumber evidence="1">6.1.1.11</ecNumber>
    </recommendedName>
    <alternativeName>
        <fullName evidence="1">Seryl-tRNA synthetase</fullName>
        <shortName evidence="1">SerRS</shortName>
    </alternativeName>
    <alternativeName>
        <fullName evidence="1">Seryl-tRNA(Ser/Sec) synthetase</fullName>
    </alternativeName>
</protein>